<protein>
    <recommendedName>
        <fullName evidence="1">Ribosome-binding factor A</fullName>
    </recommendedName>
</protein>
<comment type="function">
    <text evidence="1">One of several proteins that assist in the late maturation steps of the functional core of the 30S ribosomal subunit. Associates with free 30S ribosomal subunits (but not with 30S subunits that are part of 70S ribosomes or polysomes). Required for efficient processing of 16S rRNA. May interact with the 5'-terminal helix region of 16S rRNA.</text>
</comment>
<comment type="subunit">
    <text evidence="1">Monomer. Binds 30S ribosomal subunits, but not 50S ribosomal subunits or 70S ribosomes.</text>
</comment>
<comment type="subcellular location">
    <subcellularLocation>
        <location evidence="1">Cytoplasm</location>
    </subcellularLocation>
</comment>
<comment type="similarity">
    <text evidence="1">Belongs to the RbfA family.</text>
</comment>
<keyword id="KW-0963">Cytoplasm</keyword>
<keyword id="KW-0690">Ribosome biogenesis</keyword>
<proteinExistence type="inferred from homology"/>
<organism>
    <name type="scientific">Hydrogenovibrio crunogenus (strain DSM 25203 / XCL-2)</name>
    <name type="common">Thiomicrospira crunogena</name>
    <dbReference type="NCBI Taxonomy" id="317025"/>
    <lineage>
        <taxon>Bacteria</taxon>
        <taxon>Pseudomonadati</taxon>
        <taxon>Pseudomonadota</taxon>
        <taxon>Gammaproteobacteria</taxon>
        <taxon>Thiotrichales</taxon>
        <taxon>Piscirickettsiaceae</taxon>
        <taxon>Hydrogenovibrio</taxon>
    </lineage>
</organism>
<gene>
    <name evidence="1" type="primary">rbfA</name>
    <name type="ordered locus">Tcr_1124</name>
</gene>
<feature type="chain" id="PRO_0000321265" description="Ribosome-binding factor A">
    <location>
        <begin position="1"/>
        <end position="121"/>
    </location>
</feature>
<reference key="1">
    <citation type="journal article" date="2006" name="PLoS Biol.">
        <title>The genome of deep-sea vent chemolithoautotroph Thiomicrospira crunogena XCL-2.</title>
        <authorList>
            <person name="Scott K.M."/>
            <person name="Sievert S.M."/>
            <person name="Abril F.N."/>
            <person name="Ball L.A."/>
            <person name="Barrett C.J."/>
            <person name="Blake R.A."/>
            <person name="Boller A.J."/>
            <person name="Chain P.S.G."/>
            <person name="Clark J.A."/>
            <person name="Davis C.R."/>
            <person name="Detter C."/>
            <person name="Do K.F."/>
            <person name="Dobrinski K.P."/>
            <person name="Faza B.I."/>
            <person name="Fitzpatrick K.A."/>
            <person name="Freyermuth S.K."/>
            <person name="Harmer T.L."/>
            <person name="Hauser L.J."/>
            <person name="Huegler M."/>
            <person name="Kerfeld C.A."/>
            <person name="Klotz M.G."/>
            <person name="Kong W.W."/>
            <person name="Land M."/>
            <person name="Lapidus A."/>
            <person name="Larimer F.W."/>
            <person name="Longo D.L."/>
            <person name="Lucas S."/>
            <person name="Malfatti S.A."/>
            <person name="Massey S.E."/>
            <person name="Martin D.D."/>
            <person name="McCuddin Z."/>
            <person name="Meyer F."/>
            <person name="Moore J.L."/>
            <person name="Ocampo L.H. Jr."/>
            <person name="Paul J.H."/>
            <person name="Paulsen I.T."/>
            <person name="Reep D.K."/>
            <person name="Ren Q."/>
            <person name="Ross R.L."/>
            <person name="Sato P.Y."/>
            <person name="Thomas P."/>
            <person name="Tinkham L.E."/>
            <person name="Zeruth G.T."/>
        </authorList>
    </citation>
    <scope>NUCLEOTIDE SEQUENCE [LARGE SCALE GENOMIC DNA]</scope>
    <source>
        <strain>DSM 25203 / XCL-2</strain>
    </source>
</reference>
<name>RBFA_HYDCU</name>
<sequence>MNEEVSRPTRVALEIRKTLMEILHRDTKDPRLEKVNITECKISKDLSIATVYFTIIGVNEKDQPAQDAIKALEKAKGFFRSEIGKRMNLRITPEVRFFYDTVAENASHIEELIFKALHQKK</sequence>
<accession>Q31GK4</accession>
<evidence type="ECO:0000255" key="1">
    <source>
        <dbReference type="HAMAP-Rule" id="MF_00003"/>
    </source>
</evidence>
<dbReference type="EMBL" id="CP000109">
    <property type="protein sequence ID" value="ABB41719.1"/>
    <property type="molecule type" value="Genomic_DNA"/>
</dbReference>
<dbReference type="SMR" id="Q31GK4"/>
<dbReference type="STRING" id="317025.Tcr_1124"/>
<dbReference type="KEGG" id="tcx:Tcr_1124"/>
<dbReference type="eggNOG" id="COG0858">
    <property type="taxonomic scope" value="Bacteria"/>
</dbReference>
<dbReference type="HOGENOM" id="CLU_089475_6_3_6"/>
<dbReference type="OrthoDB" id="307788at2"/>
<dbReference type="GO" id="GO:0005829">
    <property type="term" value="C:cytosol"/>
    <property type="evidence" value="ECO:0007669"/>
    <property type="project" value="TreeGrafter"/>
</dbReference>
<dbReference type="GO" id="GO:0043024">
    <property type="term" value="F:ribosomal small subunit binding"/>
    <property type="evidence" value="ECO:0007669"/>
    <property type="project" value="TreeGrafter"/>
</dbReference>
<dbReference type="GO" id="GO:0030490">
    <property type="term" value="P:maturation of SSU-rRNA"/>
    <property type="evidence" value="ECO:0007669"/>
    <property type="project" value="UniProtKB-UniRule"/>
</dbReference>
<dbReference type="Gene3D" id="3.30.300.20">
    <property type="match status" value="1"/>
</dbReference>
<dbReference type="HAMAP" id="MF_00003">
    <property type="entry name" value="RbfA"/>
    <property type="match status" value="1"/>
</dbReference>
<dbReference type="InterPro" id="IPR015946">
    <property type="entry name" value="KH_dom-like_a/b"/>
</dbReference>
<dbReference type="InterPro" id="IPR000238">
    <property type="entry name" value="RbfA"/>
</dbReference>
<dbReference type="InterPro" id="IPR023799">
    <property type="entry name" value="RbfA_dom_sf"/>
</dbReference>
<dbReference type="InterPro" id="IPR020053">
    <property type="entry name" value="Ribosome-bd_factorA_CS"/>
</dbReference>
<dbReference type="NCBIfam" id="TIGR00082">
    <property type="entry name" value="rbfA"/>
    <property type="match status" value="1"/>
</dbReference>
<dbReference type="PANTHER" id="PTHR33515">
    <property type="entry name" value="RIBOSOME-BINDING FACTOR A, CHLOROPLASTIC-RELATED"/>
    <property type="match status" value="1"/>
</dbReference>
<dbReference type="PANTHER" id="PTHR33515:SF1">
    <property type="entry name" value="RIBOSOME-BINDING FACTOR A, CHLOROPLASTIC-RELATED"/>
    <property type="match status" value="1"/>
</dbReference>
<dbReference type="Pfam" id="PF02033">
    <property type="entry name" value="RBFA"/>
    <property type="match status" value="1"/>
</dbReference>
<dbReference type="SUPFAM" id="SSF89919">
    <property type="entry name" value="Ribosome-binding factor A, RbfA"/>
    <property type="match status" value="1"/>
</dbReference>
<dbReference type="PROSITE" id="PS01319">
    <property type="entry name" value="RBFA"/>
    <property type="match status" value="1"/>
</dbReference>